<feature type="chain" id="PRO_1000015267" description="S-adenosylmethionine:tRNA ribosyltransferase-isomerase">
    <location>
        <begin position="1"/>
        <end position="345"/>
    </location>
</feature>
<keyword id="KW-0963">Cytoplasm</keyword>
<keyword id="KW-0671">Queuosine biosynthesis</keyword>
<keyword id="KW-1185">Reference proteome</keyword>
<keyword id="KW-0949">S-adenosyl-L-methionine</keyword>
<keyword id="KW-0808">Transferase</keyword>
<proteinExistence type="inferred from homology"/>
<gene>
    <name evidence="1" type="primary">queA</name>
    <name type="ordered locus">Sama_2194</name>
</gene>
<name>QUEA_SHEAM</name>
<organism>
    <name type="scientific">Shewanella amazonensis (strain ATCC BAA-1098 / SB2B)</name>
    <dbReference type="NCBI Taxonomy" id="326297"/>
    <lineage>
        <taxon>Bacteria</taxon>
        <taxon>Pseudomonadati</taxon>
        <taxon>Pseudomonadota</taxon>
        <taxon>Gammaproteobacteria</taxon>
        <taxon>Alteromonadales</taxon>
        <taxon>Shewanellaceae</taxon>
        <taxon>Shewanella</taxon>
    </lineage>
</organism>
<sequence>MRVADFTFDLPDELIARYPMAERTASRLLHLDGSTGALADRQFTDILALIEPGDLMIFNNTRVIPARLFGQKASGGKLEILVERMLDDKRILAHVRSSKSPKPGAEIILDGGFKMTMDARHDALFELSLKDDKTILEVLEAVGHMPLPPYIDRPDEDTDKERYQTVYNERPGAVAAPTAGLHFDESILAALKAKGVDMAFVTLHVGAGTFQPVRVDNVLEHKMHSEWAEVPADVVEKIRATKAAGKRVIAVGTTSVRSLESAAKASEGELEPFCGDTDIFIFPGFEFKVVDAMVTNFHLPESTLIMLVSAFAGFDEVIGAYRHAVEQKYRFFSYGDAMFVTKKAP</sequence>
<dbReference type="EC" id="2.4.99.17" evidence="1"/>
<dbReference type="EMBL" id="CP000507">
    <property type="protein sequence ID" value="ABM00400.1"/>
    <property type="molecule type" value="Genomic_DNA"/>
</dbReference>
<dbReference type="RefSeq" id="WP_011760307.1">
    <property type="nucleotide sequence ID" value="NC_008700.1"/>
</dbReference>
<dbReference type="SMR" id="A1S7P3"/>
<dbReference type="STRING" id="326297.Sama_2194"/>
<dbReference type="KEGG" id="saz:Sama_2194"/>
<dbReference type="eggNOG" id="COG0809">
    <property type="taxonomic scope" value="Bacteria"/>
</dbReference>
<dbReference type="HOGENOM" id="CLU_039110_1_0_6"/>
<dbReference type="OrthoDB" id="9805933at2"/>
<dbReference type="UniPathway" id="UPA00392"/>
<dbReference type="Proteomes" id="UP000009175">
    <property type="component" value="Chromosome"/>
</dbReference>
<dbReference type="GO" id="GO:0005737">
    <property type="term" value="C:cytoplasm"/>
    <property type="evidence" value="ECO:0007669"/>
    <property type="project" value="UniProtKB-SubCell"/>
</dbReference>
<dbReference type="GO" id="GO:0051075">
    <property type="term" value="F:S-adenosylmethionine:tRNA ribosyltransferase-isomerase activity"/>
    <property type="evidence" value="ECO:0007669"/>
    <property type="project" value="UniProtKB-EC"/>
</dbReference>
<dbReference type="GO" id="GO:0008616">
    <property type="term" value="P:queuosine biosynthetic process"/>
    <property type="evidence" value="ECO:0007669"/>
    <property type="project" value="UniProtKB-UniRule"/>
</dbReference>
<dbReference type="GO" id="GO:0002099">
    <property type="term" value="P:tRNA wobble guanine modification"/>
    <property type="evidence" value="ECO:0007669"/>
    <property type="project" value="TreeGrafter"/>
</dbReference>
<dbReference type="FunFam" id="2.40.10.240:FF:000001">
    <property type="entry name" value="S-adenosylmethionine:tRNA ribosyltransferase-isomerase"/>
    <property type="match status" value="1"/>
</dbReference>
<dbReference type="FunFam" id="3.40.1780.10:FF:000001">
    <property type="entry name" value="S-adenosylmethionine:tRNA ribosyltransferase-isomerase"/>
    <property type="match status" value="1"/>
</dbReference>
<dbReference type="Gene3D" id="2.40.10.240">
    <property type="entry name" value="QueA-like"/>
    <property type="match status" value="1"/>
</dbReference>
<dbReference type="Gene3D" id="3.40.1780.10">
    <property type="entry name" value="QueA-like"/>
    <property type="match status" value="1"/>
</dbReference>
<dbReference type="HAMAP" id="MF_00113">
    <property type="entry name" value="QueA"/>
    <property type="match status" value="1"/>
</dbReference>
<dbReference type="InterPro" id="IPR003699">
    <property type="entry name" value="QueA"/>
</dbReference>
<dbReference type="InterPro" id="IPR042118">
    <property type="entry name" value="QueA_dom1"/>
</dbReference>
<dbReference type="InterPro" id="IPR042119">
    <property type="entry name" value="QueA_dom2"/>
</dbReference>
<dbReference type="InterPro" id="IPR036100">
    <property type="entry name" value="QueA_sf"/>
</dbReference>
<dbReference type="NCBIfam" id="NF001140">
    <property type="entry name" value="PRK00147.1"/>
    <property type="match status" value="1"/>
</dbReference>
<dbReference type="NCBIfam" id="TIGR00113">
    <property type="entry name" value="queA"/>
    <property type="match status" value="1"/>
</dbReference>
<dbReference type="PANTHER" id="PTHR30307">
    <property type="entry name" value="S-ADENOSYLMETHIONINE:TRNA RIBOSYLTRANSFERASE-ISOMERASE"/>
    <property type="match status" value="1"/>
</dbReference>
<dbReference type="PANTHER" id="PTHR30307:SF0">
    <property type="entry name" value="S-ADENOSYLMETHIONINE:TRNA RIBOSYLTRANSFERASE-ISOMERASE"/>
    <property type="match status" value="1"/>
</dbReference>
<dbReference type="Pfam" id="PF02547">
    <property type="entry name" value="Queuosine_synth"/>
    <property type="match status" value="1"/>
</dbReference>
<dbReference type="SUPFAM" id="SSF111337">
    <property type="entry name" value="QueA-like"/>
    <property type="match status" value="1"/>
</dbReference>
<accession>A1S7P3</accession>
<reference key="1">
    <citation type="submission" date="2006-12" db="EMBL/GenBank/DDBJ databases">
        <title>Complete sequence of Shewanella amazonensis SB2B.</title>
        <authorList>
            <consortium name="US DOE Joint Genome Institute"/>
            <person name="Copeland A."/>
            <person name="Lucas S."/>
            <person name="Lapidus A."/>
            <person name="Barry K."/>
            <person name="Detter J.C."/>
            <person name="Glavina del Rio T."/>
            <person name="Hammon N."/>
            <person name="Israni S."/>
            <person name="Dalin E."/>
            <person name="Tice H."/>
            <person name="Pitluck S."/>
            <person name="Munk A.C."/>
            <person name="Brettin T."/>
            <person name="Bruce D."/>
            <person name="Han C."/>
            <person name="Tapia R."/>
            <person name="Gilna P."/>
            <person name="Schmutz J."/>
            <person name="Larimer F."/>
            <person name="Land M."/>
            <person name="Hauser L."/>
            <person name="Kyrpides N."/>
            <person name="Mikhailova N."/>
            <person name="Fredrickson J."/>
            <person name="Richardson P."/>
        </authorList>
    </citation>
    <scope>NUCLEOTIDE SEQUENCE [LARGE SCALE GENOMIC DNA]</scope>
    <source>
        <strain>ATCC BAA-1098 / SB2B</strain>
    </source>
</reference>
<protein>
    <recommendedName>
        <fullName evidence="1">S-adenosylmethionine:tRNA ribosyltransferase-isomerase</fullName>
        <ecNumber evidence="1">2.4.99.17</ecNumber>
    </recommendedName>
    <alternativeName>
        <fullName evidence="1">Queuosine biosynthesis protein QueA</fullName>
    </alternativeName>
</protein>
<comment type="function">
    <text evidence="1">Transfers and isomerizes the ribose moiety from AdoMet to the 7-aminomethyl group of 7-deazaguanine (preQ1-tRNA) to give epoxyqueuosine (oQ-tRNA).</text>
</comment>
<comment type="catalytic activity">
    <reaction evidence="1">
        <text>7-aminomethyl-7-carbaguanosine(34) in tRNA + S-adenosyl-L-methionine = epoxyqueuosine(34) in tRNA + adenine + L-methionine + 2 H(+)</text>
        <dbReference type="Rhea" id="RHEA:32155"/>
        <dbReference type="Rhea" id="RHEA-COMP:10342"/>
        <dbReference type="Rhea" id="RHEA-COMP:18582"/>
        <dbReference type="ChEBI" id="CHEBI:15378"/>
        <dbReference type="ChEBI" id="CHEBI:16708"/>
        <dbReference type="ChEBI" id="CHEBI:57844"/>
        <dbReference type="ChEBI" id="CHEBI:59789"/>
        <dbReference type="ChEBI" id="CHEBI:82833"/>
        <dbReference type="ChEBI" id="CHEBI:194443"/>
        <dbReference type="EC" id="2.4.99.17"/>
    </reaction>
</comment>
<comment type="pathway">
    <text evidence="1">tRNA modification; tRNA-queuosine biosynthesis.</text>
</comment>
<comment type="subunit">
    <text evidence="1">Monomer.</text>
</comment>
<comment type="subcellular location">
    <subcellularLocation>
        <location evidence="1">Cytoplasm</location>
    </subcellularLocation>
</comment>
<comment type="similarity">
    <text evidence="1">Belongs to the QueA family.</text>
</comment>
<evidence type="ECO:0000255" key="1">
    <source>
        <dbReference type="HAMAP-Rule" id="MF_00113"/>
    </source>
</evidence>